<dbReference type="EC" id="4.2.3.4" evidence="1"/>
<dbReference type="EMBL" id="CP000560">
    <property type="protein sequence ID" value="ABS74448.1"/>
    <property type="molecule type" value="Genomic_DNA"/>
</dbReference>
<dbReference type="RefSeq" id="WP_012117863.1">
    <property type="nucleotide sequence ID" value="NC_009725.2"/>
</dbReference>
<dbReference type="SMR" id="A7Z622"/>
<dbReference type="GeneID" id="93081221"/>
<dbReference type="KEGG" id="bay:RBAM_020860"/>
<dbReference type="HOGENOM" id="CLU_001201_0_1_9"/>
<dbReference type="UniPathway" id="UPA00053">
    <property type="reaction ID" value="UER00085"/>
</dbReference>
<dbReference type="Proteomes" id="UP000001120">
    <property type="component" value="Chromosome"/>
</dbReference>
<dbReference type="GO" id="GO:0005737">
    <property type="term" value="C:cytoplasm"/>
    <property type="evidence" value="ECO:0007669"/>
    <property type="project" value="UniProtKB-SubCell"/>
</dbReference>
<dbReference type="GO" id="GO:0003856">
    <property type="term" value="F:3-dehydroquinate synthase activity"/>
    <property type="evidence" value="ECO:0007669"/>
    <property type="project" value="UniProtKB-UniRule"/>
</dbReference>
<dbReference type="GO" id="GO:0046872">
    <property type="term" value="F:metal ion binding"/>
    <property type="evidence" value="ECO:0007669"/>
    <property type="project" value="UniProtKB-KW"/>
</dbReference>
<dbReference type="GO" id="GO:0000166">
    <property type="term" value="F:nucleotide binding"/>
    <property type="evidence" value="ECO:0007669"/>
    <property type="project" value="UniProtKB-KW"/>
</dbReference>
<dbReference type="GO" id="GO:0008652">
    <property type="term" value="P:amino acid biosynthetic process"/>
    <property type="evidence" value="ECO:0007669"/>
    <property type="project" value="UniProtKB-KW"/>
</dbReference>
<dbReference type="GO" id="GO:0009073">
    <property type="term" value="P:aromatic amino acid family biosynthetic process"/>
    <property type="evidence" value="ECO:0007669"/>
    <property type="project" value="UniProtKB-KW"/>
</dbReference>
<dbReference type="GO" id="GO:0009423">
    <property type="term" value="P:chorismate biosynthetic process"/>
    <property type="evidence" value="ECO:0007669"/>
    <property type="project" value="UniProtKB-UniRule"/>
</dbReference>
<dbReference type="CDD" id="cd08195">
    <property type="entry name" value="DHQS"/>
    <property type="match status" value="1"/>
</dbReference>
<dbReference type="FunFam" id="3.40.50.1970:FF:000007">
    <property type="entry name" value="Pentafunctional AROM polypeptide"/>
    <property type="match status" value="1"/>
</dbReference>
<dbReference type="Gene3D" id="3.40.50.1970">
    <property type="match status" value="1"/>
</dbReference>
<dbReference type="Gene3D" id="1.20.1090.10">
    <property type="entry name" value="Dehydroquinate synthase-like - alpha domain"/>
    <property type="match status" value="1"/>
</dbReference>
<dbReference type="HAMAP" id="MF_00110">
    <property type="entry name" value="DHQ_synthase"/>
    <property type="match status" value="1"/>
</dbReference>
<dbReference type="InterPro" id="IPR050071">
    <property type="entry name" value="Dehydroquinate_synthase"/>
</dbReference>
<dbReference type="InterPro" id="IPR016037">
    <property type="entry name" value="DHQ_synth_AroB"/>
</dbReference>
<dbReference type="InterPro" id="IPR030963">
    <property type="entry name" value="DHQ_synth_fam"/>
</dbReference>
<dbReference type="InterPro" id="IPR030960">
    <property type="entry name" value="DHQS/DOIS_N"/>
</dbReference>
<dbReference type="InterPro" id="IPR056179">
    <property type="entry name" value="DHQS_C"/>
</dbReference>
<dbReference type="NCBIfam" id="TIGR01357">
    <property type="entry name" value="aroB"/>
    <property type="match status" value="1"/>
</dbReference>
<dbReference type="PANTHER" id="PTHR43622">
    <property type="entry name" value="3-DEHYDROQUINATE SYNTHASE"/>
    <property type="match status" value="1"/>
</dbReference>
<dbReference type="PANTHER" id="PTHR43622:SF7">
    <property type="entry name" value="3-DEHYDROQUINATE SYNTHASE, CHLOROPLASTIC"/>
    <property type="match status" value="1"/>
</dbReference>
<dbReference type="Pfam" id="PF01761">
    <property type="entry name" value="DHQ_synthase"/>
    <property type="match status" value="1"/>
</dbReference>
<dbReference type="Pfam" id="PF24621">
    <property type="entry name" value="DHQS_C"/>
    <property type="match status" value="1"/>
</dbReference>
<dbReference type="PIRSF" id="PIRSF001455">
    <property type="entry name" value="DHQ_synth"/>
    <property type="match status" value="1"/>
</dbReference>
<dbReference type="SUPFAM" id="SSF56796">
    <property type="entry name" value="Dehydroquinate synthase-like"/>
    <property type="match status" value="1"/>
</dbReference>
<feature type="chain" id="PRO_1000094455" description="3-dehydroquinate synthase">
    <location>
        <begin position="1"/>
        <end position="362"/>
    </location>
</feature>
<feature type="binding site" evidence="1">
    <location>
        <begin position="72"/>
        <end position="77"/>
    </location>
    <ligand>
        <name>NAD(+)</name>
        <dbReference type="ChEBI" id="CHEBI:57540"/>
    </ligand>
</feature>
<feature type="binding site" evidence="1">
    <location>
        <begin position="106"/>
        <end position="110"/>
    </location>
    <ligand>
        <name>NAD(+)</name>
        <dbReference type="ChEBI" id="CHEBI:57540"/>
    </ligand>
</feature>
<feature type="binding site" evidence="1">
    <location>
        <begin position="130"/>
        <end position="131"/>
    </location>
    <ligand>
        <name>NAD(+)</name>
        <dbReference type="ChEBI" id="CHEBI:57540"/>
    </ligand>
</feature>
<feature type="binding site" evidence="1">
    <location>
        <position position="142"/>
    </location>
    <ligand>
        <name>NAD(+)</name>
        <dbReference type="ChEBI" id="CHEBI:57540"/>
    </ligand>
</feature>
<feature type="binding site" evidence="1">
    <location>
        <position position="151"/>
    </location>
    <ligand>
        <name>NAD(+)</name>
        <dbReference type="ChEBI" id="CHEBI:57540"/>
    </ligand>
</feature>
<feature type="binding site" evidence="1">
    <location>
        <position position="184"/>
    </location>
    <ligand>
        <name>Zn(2+)</name>
        <dbReference type="ChEBI" id="CHEBI:29105"/>
    </ligand>
</feature>
<feature type="binding site" evidence="1">
    <location>
        <position position="246"/>
    </location>
    <ligand>
        <name>Zn(2+)</name>
        <dbReference type="ChEBI" id="CHEBI:29105"/>
    </ligand>
</feature>
<feature type="binding site" evidence="1">
    <location>
        <position position="263"/>
    </location>
    <ligand>
        <name>Zn(2+)</name>
        <dbReference type="ChEBI" id="CHEBI:29105"/>
    </ligand>
</feature>
<keyword id="KW-0028">Amino-acid biosynthesis</keyword>
<keyword id="KW-0057">Aromatic amino acid biosynthesis</keyword>
<keyword id="KW-0170">Cobalt</keyword>
<keyword id="KW-0963">Cytoplasm</keyword>
<keyword id="KW-0456">Lyase</keyword>
<keyword id="KW-0479">Metal-binding</keyword>
<keyword id="KW-0520">NAD</keyword>
<keyword id="KW-0547">Nucleotide-binding</keyword>
<keyword id="KW-0862">Zinc</keyword>
<proteinExistence type="inferred from homology"/>
<accession>A7Z622</accession>
<name>AROB_BACVZ</name>
<evidence type="ECO:0000255" key="1">
    <source>
        <dbReference type="HAMAP-Rule" id="MF_00110"/>
    </source>
</evidence>
<comment type="function">
    <text evidence="1">Catalyzes the conversion of 3-deoxy-D-arabino-heptulosonate 7-phosphate (DAHP) to dehydroquinate (DHQ).</text>
</comment>
<comment type="catalytic activity">
    <reaction evidence="1">
        <text>7-phospho-2-dehydro-3-deoxy-D-arabino-heptonate = 3-dehydroquinate + phosphate</text>
        <dbReference type="Rhea" id="RHEA:21968"/>
        <dbReference type="ChEBI" id="CHEBI:32364"/>
        <dbReference type="ChEBI" id="CHEBI:43474"/>
        <dbReference type="ChEBI" id="CHEBI:58394"/>
        <dbReference type="EC" id="4.2.3.4"/>
    </reaction>
</comment>
<comment type="cofactor">
    <cofactor evidence="1">
        <name>Co(2+)</name>
        <dbReference type="ChEBI" id="CHEBI:48828"/>
    </cofactor>
    <cofactor evidence="1">
        <name>Zn(2+)</name>
        <dbReference type="ChEBI" id="CHEBI:29105"/>
    </cofactor>
    <text evidence="1">Binds 1 divalent metal cation per subunit. Can use either Co(2+) or Zn(2+).</text>
</comment>
<comment type="cofactor">
    <cofactor evidence="1">
        <name>NAD(+)</name>
        <dbReference type="ChEBI" id="CHEBI:57540"/>
    </cofactor>
</comment>
<comment type="pathway">
    <text evidence="1">Metabolic intermediate biosynthesis; chorismate biosynthesis; chorismate from D-erythrose 4-phosphate and phosphoenolpyruvate: step 2/7.</text>
</comment>
<comment type="subcellular location">
    <subcellularLocation>
        <location evidence="1">Cytoplasm</location>
    </subcellularLocation>
</comment>
<comment type="similarity">
    <text evidence="1">Belongs to the sugar phosphate cyclases superfamily. Dehydroquinate synthase family.</text>
</comment>
<gene>
    <name evidence="1" type="primary">aroB</name>
    <name type="ordered locus">RBAM_020860</name>
</gene>
<sequence length="362" mass="40336">MKELEVRTASSAYPVYIGEGIRKQAAALLSSLNRPLTKILLIIDAEVDRLYGDEMFRLLNETWPVKKVIVPSGEEAKSLKEYERIQTEAIAFHMDRSSCMIAFGGGVTGDLAGFCAATFMRGIDFIQMPTTLLAHDSAVGGKVAVNHKLGKNLIGAFYQPKAVIYDTELLKTLPEQELRSGMAEVIKHAFIADHAFLEKLLTFDTLQGLTSAELNEMIYKGISIKSAVVREDEKEEGIRAFLNFGHTLGHAVEAEYGYGRITHGDAVALGMQFALYVSEQVARCKMNRKELTQWLIGLGYPGSIRQDIETPVLSARMMNDKKTRGGMTQFIVLKELGEARDCMLSKDELENLLNKWRMEETA</sequence>
<protein>
    <recommendedName>
        <fullName evidence="1">3-dehydroquinate synthase</fullName>
        <shortName evidence="1">DHQS</shortName>
        <ecNumber evidence="1">4.2.3.4</ecNumber>
    </recommendedName>
</protein>
<reference key="1">
    <citation type="journal article" date="2007" name="Nat. Biotechnol.">
        <title>Comparative analysis of the complete genome sequence of the plant growth-promoting bacterium Bacillus amyloliquefaciens FZB42.</title>
        <authorList>
            <person name="Chen X.H."/>
            <person name="Koumoutsi A."/>
            <person name="Scholz R."/>
            <person name="Eisenreich A."/>
            <person name="Schneider K."/>
            <person name="Heinemeyer I."/>
            <person name="Morgenstern B."/>
            <person name="Voss B."/>
            <person name="Hess W.R."/>
            <person name="Reva O."/>
            <person name="Junge H."/>
            <person name="Voigt B."/>
            <person name="Jungblut P.R."/>
            <person name="Vater J."/>
            <person name="Suessmuth R."/>
            <person name="Liesegang H."/>
            <person name="Strittmatter A."/>
            <person name="Gottschalk G."/>
            <person name="Borriss R."/>
        </authorList>
    </citation>
    <scope>NUCLEOTIDE SEQUENCE [LARGE SCALE GENOMIC DNA]</scope>
    <source>
        <strain>DSM 23117 / BGSC 10A6 / LMG 26770 / FZB42</strain>
    </source>
</reference>
<organism>
    <name type="scientific">Bacillus velezensis (strain DSM 23117 / BGSC 10A6 / LMG 26770 / FZB42)</name>
    <name type="common">Bacillus amyloliquefaciens subsp. plantarum</name>
    <dbReference type="NCBI Taxonomy" id="326423"/>
    <lineage>
        <taxon>Bacteria</taxon>
        <taxon>Bacillati</taxon>
        <taxon>Bacillota</taxon>
        <taxon>Bacilli</taxon>
        <taxon>Bacillales</taxon>
        <taxon>Bacillaceae</taxon>
        <taxon>Bacillus</taxon>
        <taxon>Bacillus amyloliquefaciens group</taxon>
    </lineage>
</organism>